<organism>
    <name type="scientific">Histophilus somni (strain 2336)</name>
    <name type="common">Haemophilus somnus</name>
    <dbReference type="NCBI Taxonomy" id="228400"/>
    <lineage>
        <taxon>Bacteria</taxon>
        <taxon>Pseudomonadati</taxon>
        <taxon>Pseudomonadota</taxon>
        <taxon>Gammaproteobacteria</taxon>
        <taxon>Pasteurellales</taxon>
        <taxon>Pasteurellaceae</taxon>
        <taxon>Histophilus</taxon>
    </lineage>
</organism>
<evidence type="ECO:0000255" key="1">
    <source>
        <dbReference type="HAMAP-Rule" id="MF_00107"/>
    </source>
</evidence>
<reference key="1">
    <citation type="submission" date="2008-02" db="EMBL/GenBank/DDBJ databases">
        <title>Complete sequence of Haemophilus somnus 2336.</title>
        <authorList>
            <consortium name="US DOE Joint Genome Institute"/>
            <person name="Siddaramappa S."/>
            <person name="Duncan A.J."/>
            <person name="Challacombe J.F."/>
            <person name="Rainey D."/>
            <person name="Gillaspy A.F."/>
            <person name="Carson M."/>
            <person name="Gipson J."/>
            <person name="Gipson M."/>
            <person name="Bruce D."/>
            <person name="Detter J.C."/>
            <person name="Han C.S."/>
            <person name="Land M."/>
            <person name="Tapia R."/>
            <person name="Thompson L.S."/>
            <person name="Orvis J."/>
            <person name="Zaitshik J."/>
            <person name="Barnes G."/>
            <person name="Brettin T.S."/>
            <person name="Dyer D.W."/>
            <person name="Inzana T.J."/>
        </authorList>
    </citation>
    <scope>NUCLEOTIDE SEQUENCE [LARGE SCALE GENOMIC DNA]</scope>
    <source>
        <strain>2336</strain>
    </source>
</reference>
<sequence length="162" mass="17332">MIRIGHGFDVHAFGGEGPIIIGGVAIPYEKGLVAHSDGDVALHALTDALLGAMALGDIGKLFPDTDIQYKGADSRRLLRTAYQAILDKGYQVGNVDITIIAQAPKMRPYIDSMRTVIAQDLHCDIEQVNVKATTTEKLGFTGRSEGIACEAVVLLIKQNGTK</sequence>
<name>ISPF_HISS2</name>
<proteinExistence type="inferred from homology"/>
<comment type="function">
    <text evidence="1">Involved in the biosynthesis of isopentenyl diphosphate (IPP) and dimethylallyl diphosphate (DMAPP), two major building blocks of isoprenoid compounds. Catalyzes the conversion of 4-diphosphocytidyl-2-C-methyl-D-erythritol 2-phosphate (CDP-ME2P) to 2-C-methyl-D-erythritol 2,4-cyclodiphosphate (ME-CPP) with a corresponding release of cytidine 5-monophosphate (CMP).</text>
</comment>
<comment type="catalytic activity">
    <reaction evidence="1">
        <text>4-CDP-2-C-methyl-D-erythritol 2-phosphate = 2-C-methyl-D-erythritol 2,4-cyclic diphosphate + CMP</text>
        <dbReference type="Rhea" id="RHEA:23864"/>
        <dbReference type="ChEBI" id="CHEBI:57919"/>
        <dbReference type="ChEBI" id="CHEBI:58483"/>
        <dbReference type="ChEBI" id="CHEBI:60377"/>
        <dbReference type="EC" id="4.6.1.12"/>
    </reaction>
</comment>
<comment type="cofactor">
    <cofactor evidence="1">
        <name>a divalent metal cation</name>
        <dbReference type="ChEBI" id="CHEBI:60240"/>
    </cofactor>
    <text evidence="1">Binds 1 divalent metal cation per subunit.</text>
</comment>
<comment type="pathway">
    <text evidence="1">Isoprenoid biosynthesis; isopentenyl diphosphate biosynthesis via DXP pathway; isopentenyl diphosphate from 1-deoxy-D-xylulose 5-phosphate: step 4/6.</text>
</comment>
<comment type="subunit">
    <text evidence="1">Homotrimer.</text>
</comment>
<comment type="similarity">
    <text evidence="1">Belongs to the IspF family.</text>
</comment>
<keyword id="KW-0414">Isoprene biosynthesis</keyword>
<keyword id="KW-0456">Lyase</keyword>
<keyword id="KW-0479">Metal-binding</keyword>
<accession>B0URU8</accession>
<dbReference type="EC" id="4.6.1.12" evidence="1"/>
<dbReference type="EMBL" id="CP000947">
    <property type="protein sequence ID" value="ACA32151.1"/>
    <property type="molecule type" value="Genomic_DNA"/>
</dbReference>
<dbReference type="RefSeq" id="WP_012341339.1">
    <property type="nucleotide sequence ID" value="NC_010519.1"/>
</dbReference>
<dbReference type="SMR" id="B0URU8"/>
<dbReference type="STRING" id="228400.HSM_0503"/>
<dbReference type="GeneID" id="31486782"/>
<dbReference type="KEGG" id="hsm:HSM_0503"/>
<dbReference type="HOGENOM" id="CLU_084630_2_0_6"/>
<dbReference type="UniPathway" id="UPA00056">
    <property type="reaction ID" value="UER00095"/>
</dbReference>
<dbReference type="GO" id="GO:0008685">
    <property type="term" value="F:2-C-methyl-D-erythritol 2,4-cyclodiphosphate synthase activity"/>
    <property type="evidence" value="ECO:0007669"/>
    <property type="project" value="UniProtKB-UniRule"/>
</dbReference>
<dbReference type="GO" id="GO:0046872">
    <property type="term" value="F:metal ion binding"/>
    <property type="evidence" value="ECO:0007669"/>
    <property type="project" value="UniProtKB-KW"/>
</dbReference>
<dbReference type="GO" id="GO:0019288">
    <property type="term" value="P:isopentenyl diphosphate biosynthetic process, methylerythritol 4-phosphate pathway"/>
    <property type="evidence" value="ECO:0007669"/>
    <property type="project" value="UniProtKB-UniRule"/>
</dbReference>
<dbReference type="GO" id="GO:0016114">
    <property type="term" value="P:terpenoid biosynthetic process"/>
    <property type="evidence" value="ECO:0007669"/>
    <property type="project" value="InterPro"/>
</dbReference>
<dbReference type="CDD" id="cd00554">
    <property type="entry name" value="MECDP_synthase"/>
    <property type="match status" value="1"/>
</dbReference>
<dbReference type="FunFam" id="3.30.1330.50:FF:000001">
    <property type="entry name" value="2-C-methyl-D-erythritol 2,4-cyclodiphosphate synthase"/>
    <property type="match status" value="1"/>
</dbReference>
<dbReference type="Gene3D" id="3.30.1330.50">
    <property type="entry name" value="2-C-methyl-D-erythritol 2,4-cyclodiphosphate synthase"/>
    <property type="match status" value="1"/>
</dbReference>
<dbReference type="HAMAP" id="MF_00107">
    <property type="entry name" value="IspF"/>
    <property type="match status" value="1"/>
</dbReference>
<dbReference type="InterPro" id="IPR003526">
    <property type="entry name" value="MECDP_synthase"/>
</dbReference>
<dbReference type="InterPro" id="IPR020555">
    <property type="entry name" value="MECDP_synthase_CS"/>
</dbReference>
<dbReference type="InterPro" id="IPR036571">
    <property type="entry name" value="MECDP_synthase_sf"/>
</dbReference>
<dbReference type="NCBIfam" id="TIGR00151">
    <property type="entry name" value="ispF"/>
    <property type="match status" value="1"/>
</dbReference>
<dbReference type="PANTHER" id="PTHR43181">
    <property type="entry name" value="2-C-METHYL-D-ERYTHRITOL 2,4-CYCLODIPHOSPHATE SYNTHASE, CHLOROPLASTIC"/>
    <property type="match status" value="1"/>
</dbReference>
<dbReference type="PANTHER" id="PTHR43181:SF1">
    <property type="entry name" value="2-C-METHYL-D-ERYTHRITOL 2,4-CYCLODIPHOSPHATE SYNTHASE, CHLOROPLASTIC"/>
    <property type="match status" value="1"/>
</dbReference>
<dbReference type="Pfam" id="PF02542">
    <property type="entry name" value="YgbB"/>
    <property type="match status" value="1"/>
</dbReference>
<dbReference type="SUPFAM" id="SSF69765">
    <property type="entry name" value="IpsF-like"/>
    <property type="match status" value="1"/>
</dbReference>
<dbReference type="PROSITE" id="PS01350">
    <property type="entry name" value="ISPF"/>
    <property type="match status" value="1"/>
</dbReference>
<feature type="chain" id="PRO_1000075914" description="2-C-methyl-D-erythritol 2,4-cyclodiphosphate synthase">
    <location>
        <begin position="1"/>
        <end position="162"/>
    </location>
</feature>
<feature type="binding site" evidence="1">
    <location>
        <begin position="9"/>
        <end position="11"/>
    </location>
    <ligand>
        <name>4-CDP-2-C-methyl-D-erythritol 2-phosphate</name>
        <dbReference type="ChEBI" id="CHEBI:57919"/>
    </ligand>
</feature>
<feature type="binding site" evidence="1">
    <location>
        <position position="9"/>
    </location>
    <ligand>
        <name>a divalent metal cation</name>
        <dbReference type="ChEBI" id="CHEBI:60240"/>
    </ligand>
</feature>
<feature type="binding site" evidence="1">
    <location>
        <position position="11"/>
    </location>
    <ligand>
        <name>a divalent metal cation</name>
        <dbReference type="ChEBI" id="CHEBI:60240"/>
    </ligand>
</feature>
<feature type="binding site" evidence="1">
    <location>
        <begin position="35"/>
        <end position="36"/>
    </location>
    <ligand>
        <name>4-CDP-2-C-methyl-D-erythritol 2-phosphate</name>
        <dbReference type="ChEBI" id="CHEBI:57919"/>
    </ligand>
</feature>
<feature type="binding site" evidence="1">
    <location>
        <position position="43"/>
    </location>
    <ligand>
        <name>a divalent metal cation</name>
        <dbReference type="ChEBI" id="CHEBI:60240"/>
    </ligand>
</feature>
<feature type="binding site" evidence="1">
    <location>
        <begin position="57"/>
        <end position="59"/>
    </location>
    <ligand>
        <name>4-CDP-2-C-methyl-D-erythritol 2-phosphate</name>
        <dbReference type="ChEBI" id="CHEBI:57919"/>
    </ligand>
</feature>
<feature type="binding site" evidence="1">
    <location>
        <begin position="62"/>
        <end position="66"/>
    </location>
    <ligand>
        <name>4-CDP-2-C-methyl-D-erythritol 2-phosphate</name>
        <dbReference type="ChEBI" id="CHEBI:57919"/>
    </ligand>
</feature>
<feature type="binding site" evidence="1">
    <location>
        <begin position="133"/>
        <end position="136"/>
    </location>
    <ligand>
        <name>4-CDP-2-C-methyl-D-erythritol 2-phosphate</name>
        <dbReference type="ChEBI" id="CHEBI:57919"/>
    </ligand>
</feature>
<feature type="binding site" evidence="1">
    <location>
        <position position="140"/>
    </location>
    <ligand>
        <name>4-CDP-2-C-methyl-D-erythritol 2-phosphate</name>
        <dbReference type="ChEBI" id="CHEBI:57919"/>
    </ligand>
</feature>
<feature type="binding site" evidence="1">
    <location>
        <position position="143"/>
    </location>
    <ligand>
        <name>4-CDP-2-C-methyl-D-erythritol 2-phosphate</name>
        <dbReference type="ChEBI" id="CHEBI:57919"/>
    </ligand>
</feature>
<feature type="site" description="Transition state stabilizer" evidence="1">
    <location>
        <position position="35"/>
    </location>
</feature>
<feature type="site" description="Transition state stabilizer" evidence="1">
    <location>
        <position position="134"/>
    </location>
</feature>
<protein>
    <recommendedName>
        <fullName evidence="1">2-C-methyl-D-erythritol 2,4-cyclodiphosphate synthase</fullName>
        <shortName evidence="1">MECDP-synthase</shortName>
        <shortName evidence="1">MECPP-synthase</shortName>
        <shortName evidence="1">MECPS</shortName>
        <ecNumber evidence="1">4.6.1.12</ecNumber>
    </recommendedName>
</protein>
<gene>
    <name evidence="1" type="primary">ispF</name>
    <name type="ordered locus">HSM_0503</name>
</gene>